<organism>
    <name type="scientific">Saccharomyces cerevisiae (strain YJM789)</name>
    <name type="common">Baker's yeast</name>
    <dbReference type="NCBI Taxonomy" id="307796"/>
    <lineage>
        <taxon>Eukaryota</taxon>
        <taxon>Fungi</taxon>
        <taxon>Dikarya</taxon>
        <taxon>Ascomycota</taxon>
        <taxon>Saccharomycotina</taxon>
        <taxon>Saccharomycetes</taxon>
        <taxon>Saccharomycetales</taxon>
        <taxon>Saccharomycetaceae</taxon>
        <taxon>Saccharomyces</taxon>
    </lineage>
</organism>
<keyword id="KW-0963">Cytoplasm</keyword>
<reference key="1">
    <citation type="journal article" date="2007" name="Proc. Natl. Acad. Sci. U.S.A.">
        <title>Genome sequencing and comparative analysis of Saccharomyces cerevisiae strain YJM789.</title>
        <authorList>
            <person name="Wei W."/>
            <person name="McCusker J.H."/>
            <person name="Hyman R.W."/>
            <person name="Jones T."/>
            <person name="Ning Y."/>
            <person name="Cao Z."/>
            <person name="Gu Z."/>
            <person name="Bruno D."/>
            <person name="Miranda M."/>
            <person name="Nguyen M."/>
            <person name="Wilhelmy J."/>
            <person name="Komp C."/>
            <person name="Tamse R."/>
            <person name="Wang X."/>
            <person name="Jia P."/>
            <person name="Luedi P."/>
            <person name="Oefner P.J."/>
            <person name="David L."/>
            <person name="Dietrich F.S."/>
            <person name="Li Y."/>
            <person name="Davis R.W."/>
            <person name="Steinmetz L.M."/>
        </authorList>
    </citation>
    <scope>NUCLEOTIDE SEQUENCE [LARGE SCALE GENOMIC DNA]</scope>
    <source>
        <strain>YJM789</strain>
    </source>
</reference>
<protein>
    <recommendedName>
        <fullName>Respiratory growth induced protein 2</fullName>
    </recommendedName>
</protein>
<feature type="chain" id="PRO_0000402301" description="Respiratory growth induced protein 2">
    <location>
        <begin position="1"/>
        <end position="164"/>
    </location>
</feature>
<dbReference type="EMBL" id="AAFW02000124">
    <property type="protein sequence ID" value="EDN61438.1"/>
    <property type="molecule type" value="Genomic_DNA"/>
</dbReference>
<dbReference type="SMR" id="A6ZVL3"/>
<dbReference type="HOGENOM" id="CLU_118207_0_0_1"/>
<dbReference type="Proteomes" id="UP000007060">
    <property type="component" value="Unassembled WGS sequence"/>
</dbReference>
<dbReference type="GO" id="GO:0005737">
    <property type="term" value="C:cytoplasm"/>
    <property type="evidence" value="ECO:0007669"/>
    <property type="project" value="UniProtKB-SubCell"/>
</dbReference>
<dbReference type="GO" id="GO:0006112">
    <property type="term" value="P:energy reserve metabolic process"/>
    <property type="evidence" value="ECO:0007669"/>
    <property type="project" value="InterPro"/>
</dbReference>
<dbReference type="FunFam" id="3.40.1000.40:FF:000001">
    <property type="entry name" value="Respiratory growth induced protein 2"/>
    <property type="match status" value="1"/>
</dbReference>
<dbReference type="Gene3D" id="3.40.1000.40">
    <property type="entry name" value="Respiratory growth induced protein 1"/>
    <property type="match status" value="1"/>
</dbReference>
<dbReference type="InterPro" id="IPR022554">
    <property type="entry name" value="RGI1"/>
</dbReference>
<dbReference type="InterPro" id="IPR038235">
    <property type="entry name" value="RGI1_sf"/>
</dbReference>
<dbReference type="Pfam" id="PF10843">
    <property type="entry name" value="RGI1"/>
    <property type="match status" value="1"/>
</dbReference>
<evidence type="ECO:0000250" key="1"/>
<evidence type="ECO:0000305" key="2"/>
<sequence>MTKKDKKAKGPKMSTITTKSGESLKVFEDLHDFETYLKGETEDQEFDHVHCQLKYYPPFVLHDAHDDPEKIKETANSHSKKFVRHLHQHVEKHLLKDIKTAINKPELKFHDKKKQESFDRIVWNYGEETELNAKKFKVSVEVVCKHDGAMVDVDYKTEPLQPLI</sequence>
<gene>
    <name type="primary">RGI2</name>
    <name type="ORF">SCY_2729</name>
</gene>
<proteinExistence type="inferred from homology"/>
<name>RGI2_YEAS7</name>
<accession>A6ZVL3</accession>
<comment type="function">
    <text evidence="1">Involved in the control of energetic metabolism and significantly contribute to cell fitness, especially under respiratory growth conditions.</text>
</comment>
<comment type="subcellular location">
    <subcellularLocation>
        <location evidence="1">Cytoplasm</location>
    </subcellularLocation>
</comment>
<comment type="similarity">
    <text evidence="2">Belongs to the RGI1 family.</text>
</comment>